<keyword id="KW-0067">ATP-binding</keyword>
<keyword id="KW-0175">Coiled coil</keyword>
<keyword id="KW-0472">Membrane</keyword>
<keyword id="KW-0496">Mitochondrion</keyword>
<keyword id="KW-0999">Mitochondrion inner membrane</keyword>
<keyword id="KW-1135">Mitochondrion nucleoid</keyword>
<keyword id="KW-0547">Nucleotide-binding</keyword>
<keyword id="KW-1185">Reference proteome</keyword>
<keyword id="KW-0812">Transmembrane</keyword>
<keyword id="KW-1133">Transmembrane helix</keyword>
<feature type="chain" id="PRO_0000419288" description="ATPase family AAA domain-containing protein 3">
    <location>
        <begin position="1"/>
        <end position="595"/>
    </location>
</feature>
<feature type="topological domain" description="Mitochondrial intermembrane" evidence="2">
    <location>
        <begin position="1"/>
        <end position="243"/>
    </location>
</feature>
<feature type="transmembrane region" description="Helical" evidence="2">
    <location>
        <begin position="244"/>
        <end position="260"/>
    </location>
</feature>
<feature type="topological domain" description="Mitochondrial matrix" evidence="2">
    <location>
        <begin position="261"/>
        <end position="595"/>
    </location>
</feature>
<feature type="region of interest" description="Disordered" evidence="3">
    <location>
        <begin position="1"/>
        <end position="48"/>
    </location>
</feature>
<feature type="coiled-coil region" evidence="2">
    <location>
        <begin position="80"/>
        <end position="107"/>
    </location>
</feature>
<feature type="coiled-coil region" evidence="2">
    <location>
        <begin position="140"/>
        <end position="175"/>
    </location>
</feature>
<feature type="short sequence motif" description="PDZ-binding" evidence="5 7">
    <location>
        <begin position="592"/>
        <end position="595"/>
    </location>
</feature>
<feature type="compositionally biased region" description="Low complexity" evidence="3">
    <location>
        <begin position="20"/>
        <end position="35"/>
    </location>
</feature>
<feature type="binding site" evidence="2">
    <location>
        <begin position="349"/>
        <end position="356"/>
    </location>
    <ligand>
        <name>ATP</name>
        <dbReference type="ChEBI" id="CHEBI:30616"/>
    </ligand>
</feature>
<feature type="mutagenesis site" description="Increased incidence of embryonic lethality and reduced fertility as compared to wild-type." evidence="5 7">
    <location>
        <begin position="592"/>
        <end position="595"/>
    </location>
</feature>
<comment type="function">
    <text evidence="1 4 5 6">Essential for mitochondrial network organization, mitochondrial metabolism and cell growth at organism and cellular level (PubMed:19888333). Important during development for the up-regulation of mitochondrial activity during the transition to higher larval stages (PubMed:19888333). Regulates mitochondrial iron homeostasis (PubMed:26427876). May play an important role in mitochondrial protein synthesis (By similarity). May also participate in mitochondrial DNA replication (By similarity). May bind to mitochondrial DNA D-loops and contribute to nucleoid stability (By similarity). Plays a role in regulating the production of reactive oxygen species in response to heat stress (PubMed:22245785).</text>
</comment>
<comment type="subcellular location">
    <subcellularLocation>
        <location evidence="4">Mitochondrion inner membrane</location>
        <topology evidence="4">Single-pass membrane protein</topology>
    </subcellularLocation>
    <subcellularLocation>
        <location evidence="1">Mitochondrion matrix</location>
        <location evidence="1">Mitochondrion nucleoid</location>
    </subcellularLocation>
    <text evidence="1">In the mitochondrial inner membrane, enriched in sites with the potential to form contacts with the outer membrane. The N-terminal domain interacts with the inner surface of the mitochondrial outer membrane and the C-terminal domain localizes in a specific matrix compartment, where it is associated with nucleoids.</text>
</comment>
<comment type="disruption phenotype">
    <text evidence="4 5 6">RNAi-mediated knockdown results in an increased adult lifespan (PubMed:22245785). RNAi-mediated knockdown at the L1 stage of larval development results in arrest in the majority of animals at this larval stage (PubMed:19888333). Some surviving animals arrest during the subsequent larval stages (PubMed:19888333). RNAi-mediated knockdown in young adults results in a gradual decrease in the reproduction rate over time whereby initially fewer embryos are produced as compared to wild-type animals, and eventually adults fail to reproduce (PubMed:19888333). The few embryos that are produced by the young adults are viable, but animals arrest at the L1 larval stage (PubMed:19888333). RNAi-mediated knockdown results in sufficient mitochondrial function at the L1 larval stage, and no obvious changes in mitochondrial mass (PubMed:19888333). However, RNAi-mediated knockdown results in defects in mitochondrial activity and structure characterized by reduced mitochondrial NADH-ubiquinone oxidoreductase and citrate synthase activity compared to wild-type animals at later stages of development, and a disorganized mitochondrial network with thinner mitochondria (PubMed:19888333). RNAi-mediated knockdown results in increased levels of reactive oxygen species as compared to wild-type animals at 37 degrees Celsius (PubMed:22245785). RNAi-mediated knockdown during early developmental stages and at the L3 larval stage results in increased levels of iron and heme (PubMed:26427876). RNAi-mediated knockdown in a mics-1 mutant background results in an enhanced increase in adult lifespan as compared to the single mutants and wild-type animals (PubMed:22245785).</text>
</comment>
<comment type="similarity">
    <text evidence="8">Belongs to the AAA ATPase family.</text>
</comment>
<comment type="caution">
    <text evidence="5 8">Has been shown to interact (via C-terminus) with mics-1 (via PDZ domain) (PubMed:22245785). The physiological significance of this interaction is uncertain; the mics-1 PDZ domain is expected to be in the cytoplasm.</text>
</comment>
<comment type="caution">
    <text evidence="7 8">Has been shown to interact (via C-terminus) with dlg-1 (via PDZ domain) (PubMed:22245785). The physiological significance of this interaction is uncertain; the dlg-1 PDZ domain is expected to be in the cytoplasm.</text>
</comment>
<evidence type="ECO:0000250" key="1">
    <source>
        <dbReference type="UniProtKB" id="Q9NVI7"/>
    </source>
</evidence>
<evidence type="ECO:0000255" key="2"/>
<evidence type="ECO:0000256" key="3">
    <source>
        <dbReference type="SAM" id="MobiDB-lite"/>
    </source>
</evidence>
<evidence type="ECO:0000269" key="4">
    <source>
    </source>
</evidence>
<evidence type="ECO:0000269" key="5">
    <source>
    </source>
</evidence>
<evidence type="ECO:0000269" key="6">
    <source>
    </source>
</evidence>
<evidence type="ECO:0000269" key="7">
    <source>
    </source>
</evidence>
<evidence type="ECO:0000305" key="8"/>
<evidence type="ECO:0000312" key="9">
    <source>
        <dbReference type="WormBase" id="F54B3.3"/>
    </source>
</evidence>
<name>ATAD3_CAEEL</name>
<dbReference type="EMBL" id="Z48583">
    <property type="protein sequence ID" value="CAA88471.2"/>
    <property type="molecule type" value="Genomic_DNA"/>
</dbReference>
<dbReference type="PIR" id="T22612">
    <property type="entry name" value="T22612"/>
</dbReference>
<dbReference type="RefSeq" id="NP_496210.2">
    <property type="nucleotide sequence ID" value="NM_063809.9"/>
</dbReference>
<dbReference type="SMR" id="Q20748"/>
<dbReference type="BioGRID" id="39909">
    <property type="interactions" value="11"/>
</dbReference>
<dbReference type="FunCoup" id="Q20748">
    <property type="interactions" value="2221"/>
</dbReference>
<dbReference type="IntAct" id="Q20748">
    <property type="interactions" value="2"/>
</dbReference>
<dbReference type="STRING" id="6239.F54B3.3.1"/>
<dbReference type="PaxDb" id="6239-F54B3.3"/>
<dbReference type="PeptideAtlas" id="Q20748"/>
<dbReference type="EnsemblMetazoa" id="F54B3.3.1">
    <property type="protein sequence ID" value="F54B3.3.1"/>
    <property type="gene ID" value="WBGene00010015"/>
</dbReference>
<dbReference type="GeneID" id="174590"/>
<dbReference type="KEGG" id="cel:CELE_F54B3.3"/>
<dbReference type="UCSC" id="F54B3.3.1">
    <property type="organism name" value="c. elegans"/>
</dbReference>
<dbReference type="AGR" id="WB:WBGene00010015"/>
<dbReference type="CTD" id="174590"/>
<dbReference type="WormBase" id="F54B3.3">
    <property type="protein sequence ID" value="CE35878"/>
    <property type="gene ID" value="WBGene00010015"/>
    <property type="gene designation" value="atad-3"/>
</dbReference>
<dbReference type="eggNOG" id="KOG0742">
    <property type="taxonomic scope" value="Eukaryota"/>
</dbReference>
<dbReference type="HOGENOM" id="CLU_011488_2_0_1"/>
<dbReference type="InParanoid" id="Q20748"/>
<dbReference type="OMA" id="HKSITGG"/>
<dbReference type="OrthoDB" id="199596at2759"/>
<dbReference type="PhylomeDB" id="Q20748"/>
<dbReference type="Reactome" id="R-CEL-6798695">
    <property type="pathway name" value="Neutrophil degranulation"/>
</dbReference>
<dbReference type="PRO" id="PR:Q20748"/>
<dbReference type="Proteomes" id="UP000001940">
    <property type="component" value="Chromosome II"/>
</dbReference>
<dbReference type="Bgee" id="WBGene00010015">
    <property type="expression patterns" value="Expressed in pharyngeal muscle cell (C elegans) and 4 other cell types or tissues"/>
</dbReference>
<dbReference type="GO" id="GO:0005743">
    <property type="term" value="C:mitochondrial inner membrane"/>
    <property type="evidence" value="ECO:0007669"/>
    <property type="project" value="UniProtKB-SubCell"/>
</dbReference>
<dbReference type="GO" id="GO:0042645">
    <property type="term" value="C:mitochondrial nucleoid"/>
    <property type="evidence" value="ECO:0007669"/>
    <property type="project" value="UniProtKB-SubCell"/>
</dbReference>
<dbReference type="GO" id="GO:0005739">
    <property type="term" value="C:mitochondrion"/>
    <property type="evidence" value="ECO:0000314"/>
    <property type="project" value="WormBase"/>
</dbReference>
<dbReference type="GO" id="GO:0005524">
    <property type="term" value="F:ATP binding"/>
    <property type="evidence" value="ECO:0007669"/>
    <property type="project" value="UniProtKB-KW"/>
</dbReference>
<dbReference type="GO" id="GO:0016887">
    <property type="term" value="F:ATP hydrolysis activity"/>
    <property type="evidence" value="ECO:0007669"/>
    <property type="project" value="InterPro"/>
</dbReference>
<dbReference type="GO" id="GO:0007005">
    <property type="term" value="P:mitochondrion organization"/>
    <property type="evidence" value="ECO:0000315"/>
    <property type="project" value="WormBase"/>
</dbReference>
<dbReference type="CDD" id="cd19512">
    <property type="entry name" value="RecA-like_ATAD3-like"/>
    <property type="match status" value="1"/>
</dbReference>
<dbReference type="FunFam" id="3.40.50.300:FF:002990">
    <property type="entry name" value="ATPase family AAA domain-containing protein 3"/>
    <property type="match status" value="1"/>
</dbReference>
<dbReference type="Gene3D" id="3.40.50.300">
    <property type="entry name" value="P-loop containing nucleotide triphosphate hydrolases"/>
    <property type="match status" value="1"/>
</dbReference>
<dbReference type="InterPro" id="IPR003593">
    <property type="entry name" value="AAA+_ATPase"/>
</dbReference>
<dbReference type="InterPro" id="IPR021911">
    <property type="entry name" value="ATAD3_N"/>
</dbReference>
<dbReference type="InterPro" id="IPR003959">
    <property type="entry name" value="ATPase_AAA_core"/>
</dbReference>
<dbReference type="InterPro" id="IPR027417">
    <property type="entry name" value="P-loop_NTPase"/>
</dbReference>
<dbReference type="PANTHER" id="PTHR23075:SF0">
    <property type="entry name" value="ATPASE FAMILY AAA DOMAIN-CONTAINING PROTEIN 3"/>
    <property type="match status" value="1"/>
</dbReference>
<dbReference type="PANTHER" id="PTHR23075">
    <property type="entry name" value="PUTATIVE ATP-ASE"/>
    <property type="match status" value="1"/>
</dbReference>
<dbReference type="Pfam" id="PF00004">
    <property type="entry name" value="AAA"/>
    <property type="match status" value="1"/>
</dbReference>
<dbReference type="Pfam" id="PF12037">
    <property type="entry name" value="ATAD3_N"/>
    <property type="match status" value="1"/>
</dbReference>
<dbReference type="SMART" id="SM00382">
    <property type="entry name" value="AAA"/>
    <property type="match status" value="1"/>
</dbReference>
<dbReference type="SUPFAM" id="SSF52540">
    <property type="entry name" value="P-loop containing nucleoside triphosphate hydrolases"/>
    <property type="match status" value="1"/>
</dbReference>
<reference key="1">
    <citation type="journal article" date="1998" name="Science">
        <title>Genome sequence of the nematode C. elegans: a platform for investigating biology.</title>
        <authorList>
            <consortium name="The C. elegans sequencing consortium"/>
        </authorList>
    </citation>
    <scope>NUCLEOTIDE SEQUENCE [LARGE SCALE GENOMIC DNA]</scope>
    <source>
        <strain>Bristol N2</strain>
    </source>
</reference>
<reference key="2">
    <citation type="journal article" date="2009" name="PLoS ONE">
        <title>C. elegans ATAD-3 is essential for mitochondrial activity and development.</title>
        <authorList>
            <person name="Hoffmann M."/>
            <person name="Bellance N."/>
            <person name="Rossignol R."/>
            <person name="Koopman W.J."/>
            <person name="Willems P.H."/>
            <person name="Mayatepek E."/>
            <person name="Bossinger O."/>
            <person name="Distelmaier F."/>
        </authorList>
    </citation>
    <scope>FUNCTION</scope>
    <scope>SUBCELLULAR LOCATION</scope>
    <scope>DISRUPTION PHENOTYPE</scope>
</reference>
<reference key="3">
    <citation type="journal article" date="2012" name="Exp. Gerontol.">
        <title>MICS-1 interacts with mitochondrial ATAD-3 and modulates lifespan in C. elegans.</title>
        <authorList>
            <person name="Hoffmann M."/>
            <person name="Honnen S."/>
            <person name="Mayatepek E."/>
            <person name="Waetjen W."/>
            <person name="Koopman W.J."/>
            <person name="Bossinger O."/>
            <person name="Distelmaier F."/>
        </authorList>
    </citation>
    <scope>FUNCTION</scope>
    <scope>DISRUPTION PHENOTYPE</scope>
    <scope>MUTAGENESIS OF 592-GLU--VAL-595</scope>
</reference>
<reference key="4">
    <citation type="journal article" date="2015" name="Biochem. Biophys. Res. Commun.">
        <title>Caenorhabditis elegans ATAD-3 modulates mitochondrial iron and heme homeostasis.</title>
        <authorList>
            <person name="van den Ecker D."/>
            <person name="Hoffmann M."/>
            <person name="Mueting G."/>
            <person name="Maglioni S."/>
            <person name="Herebian D."/>
            <person name="Mayatepek E."/>
            <person name="Ventura N."/>
            <person name="Distelmaier F."/>
        </authorList>
    </citation>
    <scope>FUNCTION</scope>
    <scope>DISRUPTION PHENOTYPE</scope>
</reference>
<reference key="5">
    <citation type="journal article" date="2016" name="BMC Biol.">
        <title>A tissue-specific protein purification approach in Caenorhabditis elegans identifies novel interaction partners of DLG-1/Discs large.</title>
        <authorList>
            <person name="Waaijers S."/>
            <person name="Munoz J."/>
            <person name="Berends C."/>
            <person name="Ramalho J.J."/>
            <person name="Goerdayal S.S."/>
            <person name="Low T.Y."/>
            <person name="Zoumaro-Djayoon A.D."/>
            <person name="Hoffmann M."/>
            <person name="Koorman T."/>
            <person name="Tas R.P."/>
            <person name="Harterink M."/>
            <person name="Seelk S."/>
            <person name="Kerver J."/>
            <person name="Hoogenraad C.C."/>
            <person name="Bossinger O."/>
            <person name="Tursun B."/>
            <person name="van den Heuvel S."/>
            <person name="Heck A.J."/>
            <person name="Boxem M."/>
        </authorList>
    </citation>
    <scope>IDENTIFICATION BY MASS SPECTROMETRY</scope>
    <scope>MUTAGENESIS OF 592-GLU--VAL-595</scope>
</reference>
<accession>Q20748</accession>
<proteinExistence type="evidence at protein level"/>
<organism>
    <name type="scientific">Caenorhabditis elegans</name>
    <dbReference type="NCBI Taxonomy" id="6239"/>
    <lineage>
        <taxon>Eukaryota</taxon>
        <taxon>Metazoa</taxon>
        <taxon>Ecdysozoa</taxon>
        <taxon>Nematoda</taxon>
        <taxon>Chromadorea</taxon>
        <taxon>Rhabditida</taxon>
        <taxon>Rhabditina</taxon>
        <taxon>Rhabditomorpha</taxon>
        <taxon>Rhabditoidea</taxon>
        <taxon>Rhabditidae</taxon>
        <taxon>Peloderinae</taxon>
        <taxon>Caenorhabditis</taxon>
    </lineage>
</organism>
<sequence>MSWLFGVQKNATPQIPDDFQAGAAPGGPQQPGQGQRQEGNSKMAYSFDSTALERAAKAARDLEKFPNAKEALELSRMQEVTRQKEVENETKKIEAQLANMKSEHIRVAEEERRKTLGEETKHAHSRAEYQDQLARKRAEEELAMKARMQEESLRKQEESVKKQEQLRKQTIEHELALKHKYELEKIDAETRARAKAARDNRDVNLEQMKLHEEENRKTVIEKIKTSGELIGSGLNQFLNDKTKIAAAVGGLTALAVGWYTAKRGTGVTARYIESRLGKPSLVRETSRITPLEVLKHPIKSVQMMTRQKKDPLNGVVLPPALERRLRDIAITTSNTKRNNGLFRNVMFYGPPGTGKTLFAKSLAQHSGLDYAVLTGGDIAPLGRDGVSAIHKVFDWASKSRKGLIVFIDEADAFLQKRSKNGMSEDTRAALNAFLFRTGEQSRKFMLVVASNQPEQFDWAVNDRFDQLVEFTLPGMEERERILLQYFNEHIVTPATSGSRSQRLKLDNFDWVAKCNEVAKKTSGMSGRELSKLVIGWQASAYASETGVLTEAIVDRNTADAMVQHEHKMEWLEKEQLKARNQEVKFGTTLKRETAV</sequence>
<protein>
    <recommendedName>
        <fullName>ATPase family AAA domain-containing protein 3</fullName>
    </recommendedName>
</protein>
<gene>
    <name evidence="9" type="primary">atad-3</name>
    <name evidence="9" type="ORF">F54B3.3</name>
</gene>